<sequence>MHRKRLRVVLSATLLDLITCVQLMLDPLVRSHVIARLVRWRHHRLLLAELVLSETRVRILRLALEQGALESGAMSSRALARIVIPRSSSRPNWKLSRVVSELSDNSKTNVYKNQLFIHCARYLLHVLP</sequence>
<comment type="function">
    <text evidence="2">Secreted effector that completely suppresses the host cell death induced by cell death-inducing proteins.</text>
</comment>
<comment type="subcellular location">
    <subcellularLocation>
        <location evidence="2">Secreted</location>
    </subcellularLocation>
    <subcellularLocation>
        <location evidence="2">Host nucleus</location>
    </subcellularLocation>
    <subcellularLocation>
        <location evidence="2">Host cytoplasm</location>
    </subcellularLocation>
</comment>
<comment type="domain">
    <text evidence="5">Has the canonical translocation RxLR motif, but lacks the canonical EER motif, which characterizes most oomycete effectors identified so far.</text>
</comment>
<comment type="similarity">
    <text evidence="4">Belongs to the RxLR effector family.</text>
</comment>
<gene>
    <name evidence="3" type="primary">RXLR57</name>
</gene>
<protein>
    <recommendedName>
        <fullName evidence="3">Secreted RxLR effector protein 57</fullName>
    </recommendedName>
</protein>
<dbReference type="SMR" id="P0CV18"/>
<dbReference type="GO" id="GO:0005576">
    <property type="term" value="C:extracellular region"/>
    <property type="evidence" value="ECO:0007669"/>
    <property type="project" value="UniProtKB-SubCell"/>
</dbReference>
<dbReference type="GO" id="GO:0030430">
    <property type="term" value="C:host cell cytoplasm"/>
    <property type="evidence" value="ECO:0007669"/>
    <property type="project" value="UniProtKB-SubCell"/>
</dbReference>
<dbReference type="GO" id="GO:0042025">
    <property type="term" value="C:host cell nucleus"/>
    <property type="evidence" value="ECO:0007669"/>
    <property type="project" value="UniProtKB-SubCell"/>
</dbReference>
<proteinExistence type="evidence at transcript level"/>
<name>RLR57_PLAVT</name>
<keyword id="KW-1035">Host cytoplasm</keyword>
<keyword id="KW-1048">Host nucleus</keyword>
<keyword id="KW-0964">Secreted</keyword>
<keyword id="KW-0732">Signal</keyword>
<keyword id="KW-0843">Virulence</keyword>
<accession>P0CV18</accession>
<organism>
    <name type="scientific">Plasmopara viticola</name>
    <name type="common">Downy mildew of grapevine</name>
    <name type="synonym">Botrytis viticola</name>
    <dbReference type="NCBI Taxonomy" id="143451"/>
    <lineage>
        <taxon>Eukaryota</taxon>
        <taxon>Sar</taxon>
        <taxon>Stramenopiles</taxon>
        <taxon>Oomycota</taxon>
        <taxon>Peronosporales</taxon>
        <taxon>Peronosporaceae</taxon>
        <taxon>Plasmopara</taxon>
    </lineage>
</organism>
<feature type="signal peptide" evidence="1">
    <location>
        <begin position="1"/>
        <end position="31"/>
    </location>
</feature>
<feature type="chain" id="PRO_0000447927" description="Secreted RxLR effector protein 57">
    <location>
        <begin position="32"/>
        <end position="128"/>
    </location>
</feature>
<feature type="short sequence motif" description="RxLR" evidence="5">
    <location>
        <begin position="58"/>
        <end position="61"/>
    </location>
</feature>
<evidence type="ECO:0000255" key="1"/>
<evidence type="ECO:0000269" key="2">
    <source>
    </source>
</evidence>
<evidence type="ECO:0000303" key="3">
    <source>
    </source>
</evidence>
<evidence type="ECO:0000305" key="4"/>
<evidence type="ECO:0000305" key="5">
    <source>
    </source>
</evidence>
<reference key="1">
    <citation type="journal article" date="2018" name="Front. Plant Sci.">
        <title>In planta functional analysis and subcellular localization of the oomycete pathogen Plasmopara viticola candidate RXLR effector repertoire.</title>
        <authorList>
            <person name="Liu Y."/>
            <person name="Lan X."/>
            <person name="Song S."/>
            <person name="Yin L."/>
            <person name="Dry I.B."/>
            <person name="Qu J."/>
            <person name="Xiang J."/>
            <person name="Lu J."/>
        </authorList>
    </citation>
    <scope>NUCLEOTIDE SEQUENCE [MRNA]</scope>
    <scope>DOMAIN</scope>
    <scope>FUNCTION</scope>
    <scope>SUBCELLULAR LOCATION</scope>
</reference>